<proteinExistence type="inferred from homology"/>
<gene>
    <name evidence="1" type="primary">atpF</name>
    <name type="ordered locus">CPF_2456</name>
</gene>
<accession>Q0TNC0</accession>
<comment type="function">
    <text evidence="1">F(1)F(0) ATP synthase produces ATP from ADP in the presence of a proton or sodium gradient. F-type ATPases consist of two structural domains, F(1) containing the extramembraneous catalytic core and F(0) containing the membrane proton channel, linked together by a central stalk and a peripheral stalk. During catalysis, ATP synthesis in the catalytic domain of F(1) is coupled via a rotary mechanism of the central stalk subunits to proton translocation.</text>
</comment>
<comment type="function">
    <text evidence="1">Component of the F(0) channel, it forms part of the peripheral stalk, linking F(1) to F(0).</text>
</comment>
<comment type="subunit">
    <text evidence="1">F-type ATPases have 2 components, F(1) - the catalytic core - and F(0) - the membrane proton channel. F(1) has five subunits: alpha(3), beta(3), gamma(1), delta(1), epsilon(1). F(0) has three main subunits: a(1), b(2) and c(10-14). The alpha and beta chains form an alternating ring which encloses part of the gamma chain. F(1) is attached to F(0) by a central stalk formed by the gamma and epsilon chains, while a peripheral stalk is formed by the delta and b chains.</text>
</comment>
<comment type="subcellular location">
    <subcellularLocation>
        <location evidence="1">Cell membrane</location>
        <topology evidence="1">Single-pass membrane protein</topology>
    </subcellularLocation>
</comment>
<comment type="similarity">
    <text evidence="1">Belongs to the ATPase B chain family.</text>
</comment>
<reference key="1">
    <citation type="journal article" date="2006" name="Genome Res.">
        <title>Skewed genomic variability in strains of the toxigenic bacterial pathogen, Clostridium perfringens.</title>
        <authorList>
            <person name="Myers G.S.A."/>
            <person name="Rasko D.A."/>
            <person name="Cheung J.K."/>
            <person name="Ravel J."/>
            <person name="Seshadri R."/>
            <person name="DeBoy R.T."/>
            <person name="Ren Q."/>
            <person name="Varga J."/>
            <person name="Awad M.M."/>
            <person name="Brinkac L.M."/>
            <person name="Daugherty S.C."/>
            <person name="Haft D.H."/>
            <person name="Dodson R.J."/>
            <person name="Madupu R."/>
            <person name="Nelson W.C."/>
            <person name="Rosovitz M.J."/>
            <person name="Sullivan S.A."/>
            <person name="Khouri H."/>
            <person name="Dimitrov G.I."/>
            <person name="Watkins K.L."/>
            <person name="Mulligan S."/>
            <person name="Benton J."/>
            <person name="Radune D."/>
            <person name="Fisher D.J."/>
            <person name="Atkins H.S."/>
            <person name="Hiscox T."/>
            <person name="Jost B.H."/>
            <person name="Billington S.J."/>
            <person name="Songer J.G."/>
            <person name="McClane B.A."/>
            <person name="Titball R.W."/>
            <person name="Rood J.I."/>
            <person name="Melville S.B."/>
            <person name="Paulsen I.T."/>
        </authorList>
    </citation>
    <scope>NUCLEOTIDE SEQUENCE [LARGE SCALE GENOMIC DNA]</scope>
    <source>
        <strain>ATCC 13124 / DSM 756 / JCM 1290 / NCIMB 6125 / NCTC 8237 / S 107 / Type A</strain>
    </source>
</reference>
<sequence>MEIDFMRILATIINFIILILILKHFFWDKIKRAIDARQEAIDETILKADEDAEKARRLRLDNERILKSAKEEGRKLREEQKKEADRIYKEIVDDAHREAEAIINRANIEIQREEEKVKYELKQQVVDISVMLSEKALGESIDESKHRELINDFIEKVGI</sequence>
<feature type="chain" id="PRO_0000368431" description="ATP synthase subunit b">
    <location>
        <begin position="1"/>
        <end position="159"/>
    </location>
</feature>
<feature type="transmembrane region" description="Helical" evidence="1">
    <location>
        <begin position="8"/>
        <end position="28"/>
    </location>
</feature>
<name>ATPF_CLOP1</name>
<organism>
    <name type="scientific">Clostridium perfringens (strain ATCC 13124 / DSM 756 / JCM 1290 / NCIMB 6125 / NCTC 8237 / Type A)</name>
    <dbReference type="NCBI Taxonomy" id="195103"/>
    <lineage>
        <taxon>Bacteria</taxon>
        <taxon>Bacillati</taxon>
        <taxon>Bacillota</taxon>
        <taxon>Clostridia</taxon>
        <taxon>Eubacteriales</taxon>
        <taxon>Clostridiaceae</taxon>
        <taxon>Clostridium</taxon>
    </lineage>
</organism>
<protein>
    <recommendedName>
        <fullName evidence="1">ATP synthase subunit b</fullName>
    </recommendedName>
    <alternativeName>
        <fullName evidence="1">ATP synthase F(0) sector subunit b</fullName>
    </alternativeName>
    <alternativeName>
        <fullName evidence="1">ATPase subunit I</fullName>
    </alternativeName>
    <alternativeName>
        <fullName evidence="1">F-type ATPase subunit b</fullName>
        <shortName evidence="1">F-ATPase subunit b</shortName>
    </alternativeName>
</protein>
<dbReference type="EMBL" id="CP000246">
    <property type="protein sequence ID" value="ABG82504.1"/>
    <property type="molecule type" value="Genomic_DNA"/>
</dbReference>
<dbReference type="RefSeq" id="WP_003452454.1">
    <property type="nucleotide sequence ID" value="NC_008261.1"/>
</dbReference>
<dbReference type="SMR" id="Q0TNC0"/>
<dbReference type="STRING" id="195103.CPF_2456"/>
<dbReference type="PaxDb" id="195103-CPF_2456"/>
<dbReference type="KEGG" id="cpf:CPF_2456"/>
<dbReference type="eggNOG" id="COG0711">
    <property type="taxonomic scope" value="Bacteria"/>
</dbReference>
<dbReference type="HOGENOM" id="CLU_079215_4_0_9"/>
<dbReference type="Proteomes" id="UP000001823">
    <property type="component" value="Chromosome"/>
</dbReference>
<dbReference type="GO" id="GO:0005886">
    <property type="term" value="C:plasma membrane"/>
    <property type="evidence" value="ECO:0007669"/>
    <property type="project" value="UniProtKB-SubCell"/>
</dbReference>
<dbReference type="GO" id="GO:0045259">
    <property type="term" value="C:proton-transporting ATP synthase complex"/>
    <property type="evidence" value="ECO:0007669"/>
    <property type="project" value="UniProtKB-KW"/>
</dbReference>
<dbReference type="GO" id="GO:0046933">
    <property type="term" value="F:proton-transporting ATP synthase activity, rotational mechanism"/>
    <property type="evidence" value="ECO:0007669"/>
    <property type="project" value="UniProtKB-UniRule"/>
</dbReference>
<dbReference type="GO" id="GO:0046961">
    <property type="term" value="F:proton-transporting ATPase activity, rotational mechanism"/>
    <property type="evidence" value="ECO:0007669"/>
    <property type="project" value="TreeGrafter"/>
</dbReference>
<dbReference type="CDD" id="cd06503">
    <property type="entry name" value="ATP-synt_Fo_b"/>
    <property type="match status" value="1"/>
</dbReference>
<dbReference type="Gene3D" id="1.20.5.620">
    <property type="entry name" value="F1F0 ATP synthase subunit B, membrane domain"/>
    <property type="match status" value="1"/>
</dbReference>
<dbReference type="HAMAP" id="MF_01398">
    <property type="entry name" value="ATP_synth_b_bprime"/>
    <property type="match status" value="1"/>
</dbReference>
<dbReference type="InterPro" id="IPR028987">
    <property type="entry name" value="ATP_synth_B-like_membr_sf"/>
</dbReference>
<dbReference type="InterPro" id="IPR002146">
    <property type="entry name" value="ATP_synth_b/b'su_bac/chlpt"/>
</dbReference>
<dbReference type="InterPro" id="IPR005864">
    <property type="entry name" value="ATP_synth_F0_bsu_bac"/>
</dbReference>
<dbReference type="InterPro" id="IPR050059">
    <property type="entry name" value="ATP_synthase_B_chain"/>
</dbReference>
<dbReference type="NCBIfam" id="TIGR01144">
    <property type="entry name" value="ATP_synt_b"/>
    <property type="match status" value="1"/>
</dbReference>
<dbReference type="NCBIfam" id="NF009992">
    <property type="entry name" value="PRK13461.1"/>
    <property type="match status" value="1"/>
</dbReference>
<dbReference type="PANTHER" id="PTHR33445:SF1">
    <property type="entry name" value="ATP SYNTHASE SUBUNIT B"/>
    <property type="match status" value="1"/>
</dbReference>
<dbReference type="PANTHER" id="PTHR33445">
    <property type="entry name" value="ATP SYNTHASE SUBUNIT B', CHLOROPLASTIC"/>
    <property type="match status" value="1"/>
</dbReference>
<dbReference type="Pfam" id="PF00430">
    <property type="entry name" value="ATP-synt_B"/>
    <property type="match status" value="1"/>
</dbReference>
<dbReference type="SUPFAM" id="SSF81573">
    <property type="entry name" value="F1F0 ATP synthase subunit B, membrane domain"/>
    <property type="match status" value="1"/>
</dbReference>
<keyword id="KW-0066">ATP synthesis</keyword>
<keyword id="KW-1003">Cell membrane</keyword>
<keyword id="KW-0138">CF(0)</keyword>
<keyword id="KW-0375">Hydrogen ion transport</keyword>
<keyword id="KW-0406">Ion transport</keyword>
<keyword id="KW-0472">Membrane</keyword>
<keyword id="KW-0812">Transmembrane</keyword>
<keyword id="KW-1133">Transmembrane helix</keyword>
<keyword id="KW-0813">Transport</keyword>
<evidence type="ECO:0000255" key="1">
    <source>
        <dbReference type="HAMAP-Rule" id="MF_01398"/>
    </source>
</evidence>